<name>Y2216_METBU</name>
<evidence type="ECO:0000255" key="1">
    <source>
        <dbReference type="HAMAP-Rule" id="MF_01361"/>
    </source>
</evidence>
<accession>Q12TZ6</accession>
<organism>
    <name type="scientific">Methanococcoides burtonii (strain DSM 6242 / NBRC 107633 / OCM 468 / ACE-M)</name>
    <dbReference type="NCBI Taxonomy" id="259564"/>
    <lineage>
        <taxon>Archaea</taxon>
        <taxon>Methanobacteriati</taxon>
        <taxon>Methanobacteriota</taxon>
        <taxon>Stenosarchaea group</taxon>
        <taxon>Methanomicrobia</taxon>
        <taxon>Methanosarcinales</taxon>
        <taxon>Methanosarcinaceae</taxon>
        <taxon>Methanococcoides</taxon>
    </lineage>
</organism>
<protein>
    <recommendedName>
        <fullName evidence="1">UPF0391 membrane protein Mbur_2216</fullName>
    </recommendedName>
</protein>
<gene>
    <name type="ordered locus">Mbur_2216</name>
</gene>
<feature type="chain" id="PRO_0000256813" description="UPF0391 membrane protein Mbur_2216">
    <location>
        <begin position="1"/>
        <end position="51"/>
    </location>
</feature>
<feature type="transmembrane region" description="Helical" evidence="1">
    <location>
        <begin position="1"/>
        <end position="21"/>
    </location>
</feature>
<feature type="transmembrane region" description="Helical" evidence="1">
    <location>
        <begin position="31"/>
        <end position="51"/>
    </location>
</feature>
<comment type="subcellular location">
    <subcellularLocation>
        <location evidence="1">Cell membrane</location>
        <topology evidence="1">Multi-pass membrane protein</topology>
    </subcellularLocation>
</comment>
<comment type="similarity">
    <text evidence="1">Belongs to the UPF0391 family.</text>
</comment>
<sequence>MADLIGLAIVFLIFALVAYVLGARGVAGLSMTIAKWLVIIFIVLAIITILL</sequence>
<dbReference type="EMBL" id="CP000300">
    <property type="protein sequence ID" value="ABE53080.1"/>
    <property type="molecule type" value="Genomic_DNA"/>
</dbReference>
<dbReference type="RefSeq" id="WP_011500216.1">
    <property type="nucleotide sequence ID" value="NC_007955.1"/>
</dbReference>
<dbReference type="STRING" id="259564.Mbur_2216"/>
<dbReference type="GeneID" id="32154226"/>
<dbReference type="KEGG" id="mbu:Mbur_2216"/>
<dbReference type="HOGENOM" id="CLU_187346_3_2_2"/>
<dbReference type="OrthoDB" id="137874at2157"/>
<dbReference type="Proteomes" id="UP000001979">
    <property type="component" value="Chromosome"/>
</dbReference>
<dbReference type="GO" id="GO:0005886">
    <property type="term" value="C:plasma membrane"/>
    <property type="evidence" value="ECO:0007669"/>
    <property type="project" value="UniProtKB-SubCell"/>
</dbReference>
<dbReference type="HAMAP" id="MF_01361">
    <property type="entry name" value="UPF0391"/>
    <property type="match status" value="1"/>
</dbReference>
<dbReference type="InterPro" id="IPR009760">
    <property type="entry name" value="DUF1328"/>
</dbReference>
<dbReference type="NCBIfam" id="NF010229">
    <property type="entry name" value="PRK13682.1-4"/>
    <property type="match status" value="1"/>
</dbReference>
<dbReference type="Pfam" id="PF07043">
    <property type="entry name" value="DUF1328"/>
    <property type="match status" value="1"/>
</dbReference>
<dbReference type="PIRSF" id="PIRSF036466">
    <property type="entry name" value="UCP036466"/>
    <property type="match status" value="1"/>
</dbReference>
<reference key="1">
    <citation type="journal article" date="2009" name="ISME J.">
        <title>The genome sequence of the psychrophilic archaeon, Methanococcoides burtonii: the role of genome evolution in cold adaptation.</title>
        <authorList>
            <person name="Allen M.A."/>
            <person name="Lauro F.M."/>
            <person name="Williams T.J."/>
            <person name="Burg D."/>
            <person name="Siddiqui K.S."/>
            <person name="De Francisci D."/>
            <person name="Chong K.W."/>
            <person name="Pilak O."/>
            <person name="Chew H.H."/>
            <person name="De Maere M.Z."/>
            <person name="Ting L."/>
            <person name="Katrib M."/>
            <person name="Ng C."/>
            <person name="Sowers K.R."/>
            <person name="Galperin M.Y."/>
            <person name="Anderson I.J."/>
            <person name="Ivanova N."/>
            <person name="Dalin E."/>
            <person name="Martinez M."/>
            <person name="Lapidus A."/>
            <person name="Hauser L."/>
            <person name="Land M."/>
            <person name="Thomas T."/>
            <person name="Cavicchioli R."/>
        </authorList>
    </citation>
    <scope>NUCLEOTIDE SEQUENCE [LARGE SCALE GENOMIC DNA]</scope>
    <source>
        <strain>DSM 6242 / NBRC 107633 / OCM 468 / ACE-M</strain>
    </source>
</reference>
<proteinExistence type="inferred from homology"/>
<keyword id="KW-1003">Cell membrane</keyword>
<keyword id="KW-0472">Membrane</keyword>
<keyword id="KW-0812">Transmembrane</keyword>
<keyword id="KW-1133">Transmembrane helix</keyword>